<keyword id="KW-0808">Transferase</keyword>
<accession>B8NM79</accession>
<organism>
    <name type="scientific">Aspergillus flavus (strain ATCC 200026 / FGSC A1120 / IAM 13836 / NRRL 3357 / JCM 12722 / SRRC 167)</name>
    <dbReference type="NCBI Taxonomy" id="332952"/>
    <lineage>
        <taxon>Eukaryota</taxon>
        <taxon>Fungi</taxon>
        <taxon>Dikarya</taxon>
        <taxon>Ascomycota</taxon>
        <taxon>Pezizomycotina</taxon>
        <taxon>Eurotiomycetes</taxon>
        <taxon>Eurotiomycetidae</taxon>
        <taxon>Eurotiales</taxon>
        <taxon>Aspergillaceae</taxon>
        <taxon>Aspergillus</taxon>
        <taxon>Aspergillus subgen. Circumdati</taxon>
    </lineage>
</organism>
<proteinExistence type="evidence at protein level"/>
<reference key="1">
    <citation type="journal article" date="2015" name="Genome Announc.">
        <title>Genome sequence of Aspergillus flavus NRRL 3357, a strain that causes aflatoxin contamination of food and feed.</title>
        <authorList>
            <person name="Nierman W.C."/>
            <person name="Yu J."/>
            <person name="Fedorova-Abrams N.D."/>
            <person name="Losada L."/>
            <person name="Cleveland T.E."/>
            <person name="Bhatnagar D."/>
            <person name="Bennett J.W."/>
            <person name="Dean R."/>
            <person name="Payne G.A."/>
        </authorList>
    </citation>
    <scope>NUCLEOTIDE SEQUENCE [LARGE SCALE GENOMIC DNA]</scope>
    <source>
        <strain>ATCC 200026 / FGSC A1120 / IAM 13836 / NRRL 3357 / JCM 12722 / SRRC 167</strain>
    </source>
</reference>
<reference key="2">
    <citation type="journal article" date="2014" name="Fungal Genet. Biol.">
        <title>Characterization of the biosynthetic gene cluster for the ribosomally synthesized cyclic peptide ustiloxin B in Aspergillus flavus.</title>
        <authorList>
            <person name="Umemura M."/>
            <person name="Nagano N."/>
            <person name="Koike H."/>
            <person name="Kawano J."/>
            <person name="Ishii T."/>
            <person name="Miyamura Y."/>
            <person name="Kikuchi M."/>
            <person name="Tamano K."/>
            <person name="Yu J."/>
            <person name="Shin-ya K."/>
            <person name="Machida M."/>
        </authorList>
    </citation>
    <scope>FUNCTION</scope>
    <scope>DISRUPTION PHENOTYPE</scope>
    <scope>CATALYTIC ACTIVITY</scope>
</reference>
<reference key="3">
    <citation type="journal article" date="2016" name="Angew. Chem. Int. Ed.">
        <title>Unveiling the biosynthetic pathway of the ribosomally synthesized and post-translationally modified peptide ustiloxin B in filamentous fungi.</title>
        <authorList>
            <person name="Ye Y."/>
            <person name="Minami A."/>
            <person name="Igarashi Y."/>
            <person name="Izumikawa M."/>
            <person name="Umemura M."/>
            <person name="Nagano N."/>
            <person name="Machida M."/>
            <person name="Kawahara T."/>
            <person name="Shin-Ya K."/>
            <person name="Gomi K."/>
            <person name="Oikawa H."/>
        </authorList>
    </citation>
    <scope>FUNCTION</scope>
    <scope>DISRUPTION PHENOTYPE</scope>
    <scope>CATALYTIC ACTIVITY</scope>
</reference>
<reference key="4">
    <citation type="journal article" date="2016" name="Fungal Genet. Biol.">
        <title>Class of cyclic ribosomal peptide synthetic genes in filamentous fungi.</title>
        <authorList>
            <person name="Nagano N."/>
            <person name="Umemura M."/>
            <person name="Izumikawa M."/>
            <person name="Kawano J."/>
            <person name="Ishii T."/>
            <person name="Kikuchi M."/>
            <person name="Tomii K."/>
            <person name="Kumagai T."/>
            <person name="Yoshimi A."/>
            <person name="Machida M."/>
            <person name="Abe K."/>
            <person name="Shin-ya K."/>
            <person name="Asai K."/>
        </authorList>
    </citation>
    <scope>FUNCTION</scope>
    <scope>DISRUPTION PHENOTYPE</scope>
</reference>
<dbReference type="EC" id="2.5.1.-" evidence="7"/>
<dbReference type="EMBL" id="EQ963480">
    <property type="protein sequence ID" value="EED49430.1"/>
    <property type="status" value="ALT_SEQ"/>
    <property type="molecule type" value="Genomic_DNA"/>
</dbReference>
<dbReference type="RefSeq" id="XP_002381331.1">
    <property type="nucleotide sequence ID" value="XM_002381290.1"/>
</dbReference>
<dbReference type="SMR" id="B8NM79"/>
<dbReference type="STRING" id="332952.B8NM79"/>
<dbReference type="EnsemblFungi" id="EED49430">
    <property type="protein sequence ID" value="EED49430"/>
    <property type="gene ID" value="AFLA_095110"/>
</dbReference>
<dbReference type="VEuPathDB" id="FungiDB:AFLA_009748"/>
<dbReference type="eggNOG" id="ENOG502SAAV">
    <property type="taxonomic scope" value="Eukaryota"/>
</dbReference>
<dbReference type="HOGENOM" id="CLU_011226_4_2_1"/>
<dbReference type="GO" id="GO:0016740">
    <property type="term" value="F:transferase activity"/>
    <property type="evidence" value="ECO:0007669"/>
    <property type="project" value="UniProtKB-KW"/>
</dbReference>
<dbReference type="Gene3D" id="1.20.1050.10">
    <property type="match status" value="1"/>
</dbReference>
<dbReference type="Gene3D" id="3.40.30.10">
    <property type="entry name" value="Glutaredoxin"/>
    <property type="match status" value="1"/>
</dbReference>
<dbReference type="InterPro" id="IPR036282">
    <property type="entry name" value="Glutathione-S-Trfase_C_sf"/>
</dbReference>
<dbReference type="InterPro" id="IPR004045">
    <property type="entry name" value="Glutathione_S-Trfase_N"/>
</dbReference>
<dbReference type="InterPro" id="IPR054416">
    <property type="entry name" value="GST_UstS-like_C"/>
</dbReference>
<dbReference type="InterPro" id="IPR036249">
    <property type="entry name" value="Thioredoxin-like_sf"/>
</dbReference>
<dbReference type="Pfam" id="PF22041">
    <property type="entry name" value="GST_C_7"/>
    <property type="match status" value="1"/>
</dbReference>
<dbReference type="Pfam" id="PF13417">
    <property type="entry name" value="GST_N_3"/>
    <property type="match status" value="1"/>
</dbReference>
<dbReference type="SUPFAM" id="SSF47616">
    <property type="entry name" value="GST C-terminal domain-like"/>
    <property type="match status" value="1"/>
</dbReference>
<dbReference type="SUPFAM" id="SSF52833">
    <property type="entry name" value="Thioredoxin-like"/>
    <property type="match status" value="1"/>
</dbReference>
<dbReference type="PROSITE" id="PS50404">
    <property type="entry name" value="GST_NTER"/>
    <property type="match status" value="1"/>
</dbReference>
<feature type="chain" id="PRO_0000437305" description="Glutathione S-transferase-like protein ustS">
    <location>
        <begin position="1"/>
        <end position="276"/>
    </location>
</feature>
<feature type="domain" description="GST N-terminal" evidence="1">
    <location>
        <begin position="16"/>
        <end position="109"/>
    </location>
</feature>
<sequence>MTKTEESPLHFFDIFSTLPGTSKSWSSNVLKIRMVLNYKGIPYTQSFHSYPDIAPLLQSLSVPPHKQGRFKYTLPAICHPSSVKSSPSGAMMDSLPIACHLDETYPDPPLFPSGEASYALALAIGKLMVPAALKTCDLLLPKAEEVLDDRGKEYFVRTRTEIFGKPLSELRPKTEEGVRAIVDGMKADMEVFISMLRGRGEGKKSGPFLEGEKPGYADFILVTFLSWSHRFDMELWREIMDMGNGEFRALWHASVQWLEGQGEEKEWAVPQLSTVD</sequence>
<name>USTS_ASPFN</name>
<gene>
    <name evidence="5" type="primary">ustS</name>
    <name type="ORF">AFLA_095110</name>
</gene>
<protein>
    <recommendedName>
        <fullName evidence="5">Glutathione S-transferase-like protein ustS</fullName>
        <ecNumber evidence="7">2.5.1.-</ecNumber>
    </recommendedName>
    <alternativeName>
        <fullName evidence="5">Ustiloxin B biosynthesis protein S</fullName>
    </alternativeName>
</protein>
<evidence type="ECO:0000255" key="1">
    <source>
        <dbReference type="PROSITE-ProRule" id="PRU00684"/>
    </source>
</evidence>
<evidence type="ECO:0000269" key="2">
    <source>
    </source>
</evidence>
<evidence type="ECO:0000269" key="3">
    <source>
    </source>
</evidence>
<evidence type="ECO:0000269" key="4">
    <source>
    </source>
</evidence>
<evidence type="ECO:0000303" key="5">
    <source>
    </source>
</evidence>
<evidence type="ECO:0000305" key="6"/>
<evidence type="ECO:0000305" key="7">
    <source>
    </source>
</evidence>
<comment type="function">
    <text evidence="2 3 4">Glutathione S-transferase-like protein; part of the gene cluster that mediates the biosynthesis of the secondary metabolite ustiloxin B, an antimitotic tetrapeptide (PubMed:24841822, PubMed:26703898, PubMed:27166860). First, ustA is processed by the subtilisin-like endoprotease Kex2 that is outside the ustiloxin B gene cluster, at the C-terminal side of Arg-Lys, after transfer to Golgi apparatus through the endoplasmic reticulum (ER) (PubMed:24841822). Cleavage by KEX2 generates 16 peptides YAIG-I to YAIG-XVI (PubMed:24841822). To process the precursor peptide further, at least two peptidases are necessary to cleave the N-terminal and C-terminal sides of the Tyr-Ala-Ile-Gly core peptide which serves as backbone for the synthesis of ustiloxin B, through cyclization and modification of the tyrosine with a non-protein coding amino acid, norvaline (PubMed:24841822). One of the two peptidases must be the serine peptidase ustP; and the other pepdidase is probably ustH (PubMed:24841822). Macrocyclization of the core peptide derived from ustA requires the tyrosinase ustQ, as well as the homologous oxidases ustYa and ustYb, and leads to the production of the first cyclization product N-desmethylustiloxin F (PubMed:26703898, PubMed:27166860). For the formation of N-desmethylustiloxin F, three oxidation steps are required, hydroxylation at the benzylic position, hydroxylation at either the aromatic ring of Tyr or beta-position of Ile, and oxidative cyclization (PubMed:27166860). UstQ may catalyze the oxidation of a phenol moiety, whereas the ustYa and ustYb are most likely responsible for the remaining two-step oxidations (PubMed:27166860). N-desmethylustiloxin F is then methylated by ustM to yield ustiloxin F which in turn substrate of the cytochrome P450 monooxygenase ustC which catalyzes the formation of S-deoxyustiloxin H (PubMed:27166860). The flavoprotein monooxygenases ustF1 and ustF2 then participate in the modification of the side chain of S-deoxyustiloxin H, leading to the synthesis of an oxime intermediate, via ustiloxin H (PubMed:27166860). Finally, carboxylative dehydration performed by the cysteine desulfurase-like protein ustD yields ustiloxin B (PubMed:27166860).</text>
</comment>
<comment type="pathway">
    <text evidence="2">Mycotoxin biosynthesis.</text>
</comment>
<comment type="disruption phenotype">
    <text evidence="2 3">Does not alter the production of ustiloxin B (PubMed:24841822, PubMed:26703898).</text>
</comment>
<comment type="similarity">
    <text evidence="6">Belongs to the GST superfamily.</text>
</comment>
<comment type="sequence caution" evidence="6">
    <conflict type="erroneous gene model prediction">
        <sequence resource="EMBL-CDS" id="EED49430"/>
    </conflict>
</comment>